<feature type="chain" id="PRO_0000169995" description="Curved DNA-binding protein">
    <location>
        <begin position="1"/>
        <end position="306"/>
    </location>
</feature>
<feature type="domain" description="J" evidence="1">
    <location>
        <begin position="5"/>
        <end position="69"/>
    </location>
</feature>
<feature type="sequence conflict" description="In Ref. 2." evidence="2" ref="2">
    <original>LEVV</original>
    <variation>PQDG</variation>
    <location>
        <begin position="211"/>
        <end position="214"/>
    </location>
</feature>
<accession>P63263</accession>
<accession>O33916</accession>
<evidence type="ECO:0000255" key="1">
    <source>
        <dbReference type="HAMAP-Rule" id="MF_01154"/>
    </source>
</evidence>
<evidence type="ECO:0000305" key="2"/>
<keyword id="KW-0143">Chaperone</keyword>
<keyword id="KW-0963">Cytoplasm</keyword>
<keyword id="KW-0238">DNA-binding</keyword>
<keyword id="KW-1185">Reference proteome</keyword>
<comment type="function">
    <text evidence="1">DNA-binding protein that preferentially recognizes a curved DNA sequence. It is probably a functional analog of DnaJ; displays overlapping activities with DnaJ, but functions under different conditions, probably acting as a molecular chaperone in an adaptive response to environmental stresses other than heat shock. Lacks autonomous chaperone activity; binds native substrates and targets them for recognition by DnaK. Its activity is inhibited by the binding of CbpM.</text>
</comment>
<comment type="subcellular location">
    <subcellularLocation>
        <location evidence="1">Cytoplasm</location>
        <location evidence="1">Nucleoid</location>
    </subcellularLocation>
</comment>
<name>CBPA_SALTY</name>
<dbReference type="EMBL" id="AE006468">
    <property type="protein sequence ID" value="AAL20044.1"/>
    <property type="molecule type" value="Genomic_DNA"/>
</dbReference>
<dbReference type="EMBL" id="U75949">
    <property type="protein sequence ID" value="AAC45599.1"/>
    <property type="molecule type" value="Genomic_DNA"/>
</dbReference>
<dbReference type="RefSeq" id="NP_460085.1">
    <property type="nucleotide sequence ID" value="NC_003197.2"/>
</dbReference>
<dbReference type="RefSeq" id="WP_000420603.1">
    <property type="nucleotide sequence ID" value="NC_003197.2"/>
</dbReference>
<dbReference type="SMR" id="P63263"/>
<dbReference type="STRING" id="99287.STM1112"/>
<dbReference type="PaxDb" id="99287-STM1112"/>
<dbReference type="GeneID" id="1252630"/>
<dbReference type="KEGG" id="stm:STM1112"/>
<dbReference type="PATRIC" id="fig|99287.12.peg.1177"/>
<dbReference type="HOGENOM" id="CLU_017633_0_0_6"/>
<dbReference type="OMA" id="FAGRDFY"/>
<dbReference type="PhylomeDB" id="P63263"/>
<dbReference type="BioCyc" id="SENT99287:STM1112-MONOMER"/>
<dbReference type="Proteomes" id="UP000001014">
    <property type="component" value="Chromosome"/>
</dbReference>
<dbReference type="GO" id="GO:0005737">
    <property type="term" value="C:cytoplasm"/>
    <property type="evidence" value="ECO:0000318"/>
    <property type="project" value="GO_Central"/>
</dbReference>
<dbReference type="GO" id="GO:0009295">
    <property type="term" value="C:nucleoid"/>
    <property type="evidence" value="ECO:0007669"/>
    <property type="project" value="UniProtKB-SubCell"/>
</dbReference>
<dbReference type="GO" id="GO:0003681">
    <property type="term" value="F:bent DNA binding"/>
    <property type="evidence" value="ECO:0007669"/>
    <property type="project" value="UniProtKB-UniRule"/>
</dbReference>
<dbReference type="GO" id="GO:0051082">
    <property type="term" value="F:unfolded protein binding"/>
    <property type="evidence" value="ECO:0000318"/>
    <property type="project" value="GO_Central"/>
</dbReference>
<dbReference type="GO" id="GO:0051085">
    <property type="term" value="P:chaperone cofactor-dependent protein refolding"/>
    <property type="evidence" value="ECO:0000318"/>
    <property type="project" value="GO_Central"/>
</dbReference>
<dbReference type="GO" id="GO:0042026">
    <property type="term" value="P:protein refolding"/>
    <property type="evidence" value="ECO:0000318"/>
    <property type="project" value="GO_Central"/>
</dbReference>
<dbReference type="CDD" id="cd06257">
    <property type="entry name" value="DnaJ"/>
    <property type="match status" value="1"/>
</dbReference>
<dbReference type="CDD" id="cd10747">
    <property type="entry name" value="DnaJ_C"/>
    <property type="match status" value="1"/>
</dbReference>
<dbReference type="FunFam" id="1.10.287.110:FF:000013">
    <property type="entry name" value="Curved DNA-binding protein"/>
    <property type="match status" value="1"/>
</dbReference>
<dbReference type="FunFam" id="2.60.260.20:FF:000008">
    <property type="entry name" value="Curved DNA-binding protein"/>
    <property type="match status" value="1"/>
</dbReference>
<dbReference type="Gene3D" id="1.10.287.110">
    <property type="entry name" value="DnaJ domain"/>
    <property type="match status" value="1"/>
</dbReference>
<dbReference type="Gene3D" id="1.20.5.460">
    <property type="entry name" value="Single helix bin"/>
    <property type="match status" value="1"/>
</dbReference>
<dbReference type="Gene3D" id="2.60.260.20">
    <property type="entry name" value="Urease metallochaperone UreE, N-terminal domain"/>
    <property type="match status" value="2"/>
</dbReference>
<dbReference type="HAMAP" id="MF_01154">
    <property type="entry name" value="CbpA"/>
    <property type="match status" value="1"/>
</dbReference>
<dbReference type="InterPro" id="IPR023859">
    <property type="entry name" value="DNA-bd_curved-DNA"/>
</dbReference>
<dbReference type="InterPro" id="IPR002939">
    <property type="entry name" value="DnaJ_C"/>
</dbReference>
<dbReference type="InterPro" id="IPR001623">
    <property type="entry name" value="DnaJ_domain"/>
</dbReference>
<dbReference type="InterPro" id="IPR018253">
    <property type="entry name" value="DnaJ_domain_CS"/>
</dbReference>
<dbReference type="InterPro" id="IPR008971">
    <property type="entry name" value="HSP40/DnaJ_pept-bd"/>
</dbReference>
<dbReference type="InterPro" id="IPR036869">
    <property type="entry name" value="J_dom_sf"/>
</dbReference>
<dbReference type="NCBIfam" id="NF007618">
    <property type="entry name" value="PRK10266.1"/>
    <property type="match status" value="1"/>
</dbReference>
<dbReference type="PANTHER" id="PTHR43096">
    <property type="entry name" value="DNAJ HOMOLOG 1, MITOCHONDRIAL-RELATED"/>
    <property type="match status" value="1"/>
</dbReference>
<dbReference type="PANTHER" id="PTHR43096:SF52">
    <property type="entry name" value="DNAJ HOMOLOG 1, MITOCHONDRIAL-RELATED"/>
    <property type="match status" value="1"/>
</dbReference>
<dbReference type="Pfam" id="PF00226">
    <property type="entry name" value="DnaJ"/>
    <property type="match status" value="1"/>
</dbReference>
<dbReference type="Pfam" id="PF01556">
    <property type="entry name" value="DnaJ_C"/>
    <property type="match status" value="1"/>
</dbReference>
<dbReference type="PRINTS" id="PR00625">
    <property type="entry name" value="JDOMAIN"/>
</dbReference>
<dbReference type="SMART" id="SM00271">
    <property type="entry name" value="DnaJ"/>
    <property type="match status" value="1"/>
</dbReference>
<dbReference type="SUPFAM" id="SSF46565">
    <property type="entry name" value="Chaperone J-domain"/>
    <property type="match status" value="1"/>
</dbReference>
<dbReference type="SUPFAM" id="SSF49493">
    <property type="entry name" value="HSP40/DnaJ peptide-binding domain"/>
    <property type="match status" value="2"/>
</dbReference>
<dbReference type="PROSITE" id="PS00636">
    <property type="entry name" value="DNAJ_1"/>
    <property type="match status" value="1"/>
</dbReference>
<dbReference type="PROSITE" id="PS50076">
    <property type="entry name" value="DNAJ_2"/>
    <property type="match status" value="1"/>
</dbReference>
<protein>
    <recommendedName>
        <fullName evidence="1">Curved DNA-binding protein</fullName>
    </recommendedName>
</protein>
<sequence length="306" mass="34693">MELKDYYAIMGVKPTDDLKTIKTAYRRLARKYHPDVSKEPDAEARFKEVAEAWEVLSDEQRRAEYDQLWQHRNDPQFNRQFQQHEGQPYNAEDFDDIFSSIFGQHGRHSHHRHAARGHDIEIEVAVFLEETLEEHQRTISYSVPVYNAFGLVEREIPKTLNVKIPAGVSNGQRIRLKGQGTPGENGGPNGDLWLVIHIAPHPLFDIVNQDLEVVLPLAPWEAALGAKVSVPTLKERILLTIPPGSQAGQRLRIKGKGLASKKHTGDLYAIIKIVMPPKPDEKTAALWQQLADAQSSFDPRQQWGKA</sequence>
<proteinExistence type="inferred from homology"/>
<reference key="1">
    <citation type="journal article" date="2001" name="Nature">
        <title>Complete genome sequence of Salmonella enterica serovar Typhimurium LT2.</title>
        <authorList>
            <person name="McClelland M."/>
            <person name="Sanderson K.E."/>
            <person name="Spieth J."/>
            <person name="Clifton S.W."/>
            <person name="Latreille P."/>
            <person name="Courtney L."/>
            <person name="Porwollik S."/>
            <person name="Ali J."/>
            <person name="Dante M."/>
            <person name="Du F."/>
            <person name="Hou S."/>
            <person name="Layman D."/>
            <person name="Leonard S."/>
            <person name="Nguyen C."/>
            <person name="Scott K."/>
            <person name="Holmes A."/>
            <person name="Grewal N."/>
            <person name="Mulvaney E."/>
            <person name="Ryan E."/>
            <person name="Sun H."/>
            <person name="Florea L."/>
            <person name="Miller W."/>
            <person name="Stoneking T."/>
            <person name="Nhan M."/>
            <person name="Waterston R."/>
            <person name="Wilson R.K."/>
        </authorList>
    </citation>
    <scope>NUCLEOTIDE SEQUENCE [LARGE SCALE GENOMIC DNA]</scope>
    <source>
        <strain>LT2 / SGSC1412 / ATCC 700720</strain>
    </source>
</reference>
<reference key="2">
    <citation type="journal article" date="1997" name="J. Bacteriol.">
        <title>A Salmonella typhimurium genetic locus which confers copper tolerance on copper-sensitive mutants of Escherichia coli.</title>
        <authorList>
            <person name="Gupta S.D."/>
            <person name="Wu H.C."/>
            <person name="Rick P.D."/>
        </authorList>
    </citation>
    <scope>NUCLEOTIDE SEQUENCE [GENOMIC DNA] OF 1-214</scope>
</reference>
<organism>
    <name type="scientific">Salmonella typhimurium (strain LT2 / SGSC1412 / ATCC 700720)</name>
    <dbReference type="NCBI Taxonomy" id="99287"/>
    <lineage>
        <taxon>Bacteria</taxon>
        <taxon>Pseudomonadati</taxon>
        <taxon>Pseudomonadota</taxon>
        <taxon>Gammaproteobacteria</taxon>
        <taxon>Enterobacterales</taxon>
        <taxon>Enterobacteriaceae</taxon>
        <taxon>Salmonella</taxon>
    </lineage>
</organism>
<gene>
    <name evidence="1" type="primary">cbpA</name>
    <name type="ordered locus">STM1112</name>
</gene>